<feature type="chain" id="PRO_0000258383" description="Phosphoribosylformylglycinamidine cyclo-ligase">
    <location>
        <begin position="1"/>
        <end position="352"/>
    </location>
</feature>
<gene>
    <name evidence="1" type="primary">purM</name>
    <name type="ordered locus">PFL_4440</name>
</gene>
<protein>
    <recommendedName>
        <fullName evidence="1">Phosphoribosylformylglycinamidine cyclo-ligase</fullName>
        <ecNumber evidence="1">6.3.3.1</ecNumber>
    </recommendedName>
    <alternativeName>
        <fullName evidence="1">AIR synthase</fullName>
    </alternativeName>
    <alternativeName>
        <fullName evidence="1">AIRS</fullName>
    </alternativeName>
    <alternativeName>
        <fullName evidence="1">Phosphoribosyl-aminoimidazole synthetase</fullName>
    </alternativeName>
</protein>
<sequence>MSKQPSLSYKDAGVDIDAGEALVERIKSVAKRTARPEVMGGLGGFGALCEIPAGYKQPVLVSGTDGVGTKLRLALNLNKHDSIGIDLVAMCVNDLVVCGAEPLFFLDYYATGKLNVDTAAQVVTGIGAGCELSGCSLVGGETAEMPGMYEGEDYDLAGFCVGVVEKAEIIDGSKVAAGDALLALPSSGPHSNGYSLIRKIIEVSGADIESIQLDGKPLTDLLMAPTRIYVKPLLKLIKDTGAVKAMAHITGGGLLDNIPRVLPKGAQAVVDVASWQRPAVFDWLQEKGNVDEHEMHRVLNCGVGMVICVAQDQVENALKVLREAGEQPWVIGQIATAAEGAAQVELKNLKAH</sequence>
<comment type="catalytic activity">
    <reaction evidence="1">
        <text>2-formamido-N(1)-(5-O-phospho-beta-D-ribosyl)acetamidine + ATP = 5-amino-1-(5-phospho-beta-D-ribosyl)imidazole + ADP + phosphate + H(+)</text>
        <dbReference type="Rhea" id="RHEA:23032"/>
        <dbReference type="ChEBI" id="CHEBI:15378"/>
        <dbReference type="ChEBI" id="CHEBI:30616"/>
        <dbReference type="ChEBI" id="CHEBI:43474"/>
        <dbReference type="ChEBI" id="CHEBI:137981"/>
        <dbReference type="ChEBI" id="CHEBI:147287"/>
        <dbReference type="ChEBI" id="CHEBI:456216"/>
        <dbReference type="EC" id="6.3.3.1"/>
    </reaction>
</comment>
<comment type="pathway">
    <text evidence="1">Purine metabolism; IMP biosynthesis via de novo pathway; 5-amino-1-(5-phospho-D-ribosyl)imidazole from N(2)-formyl-N(1)-(5-phospho-D-ribosyl)glycinamide: step 2/2.</text>
</comment>
<comment type="subcellular location">
    <subcellularLocation>
        <location evidence="1">Cytoplasm</location>
    </subcellularLocation>
</comment>
<comment type="similarity">
    <text evidence="1">Belongs to the AIR synthase family.</text>
</comment>
<organism>
    <name type="scientific">Pseudomonas fluorescens (strain ATCC BAA-477 / NRRL B-23932 / Pf-5)</name>
    <dbReference type="NCBI Taxonomy" id="220664"/>
    <lineage>
        <taxon>Bacteria</taxon>
        <taxon>Pseudomonadati</taxon>
        <taxon>Pseudomonadota</taxon>
        <taxon>Gammaproteobacteria</taxon>
        <taxon>Pseudomonadales</taxon>
        <taxon>Pseudomonadaceae</taxon>
        <taxon>Pseudomonas</taxon>
    </lineage>
</organism>
<accession>Q4K8A5</accession>
<name>PUR5_PSEF5</name>
<proteinExistence type="inferred from homology"/>
<dbReference type="EC" id="6.3.3.1" evidence="1"/>
<dbReference type="EMBL" id="CP000076">
    <property type="protein sequence ID" value="AAY93691.1"/>
    <property type="molecule type" value="Genomic_DNA"/>
</dbReference>
<dbReference type="RefSeq" id="WP_011062703.1">
    <property type="nucleotide sequence ID" value="NC_004129.6"/>
</dbReference>
<dbReference type="SMR" id="Q4K8A5"/>
<dbReference type="STRING" id="220664.PFL_4440"/>
<dbReference type="GeneID" id="57477517"/>
<dbReference type="KEGG" id="pfl:PFL_4440"/>
<dbReference type="PATRIC" id="fig|220664.5.peg.4545"/>
<dbReference type="eggNOG" id="COG0150">
    <property type="taxonomic scope" value="Bacteria"/>
</dbReference>
<dbReference type="HOGENOM" id="CLU_047116_0_0_6"/>
<dbReference type="UniPathway" id="UPA00074">
    <property type="reaction ID" value="UER00129"/>
</dbReference>
<dbReference type="Proteomes" id="UP000008540">
    <property type="component" value="Chromosome"/>
</dbReference>
<dbReference type="GO" id="GO:0005829">
    <property type="term" value="C:cytosol"/>
    <property type="evidence" value="ECO:0007669"/>
    <property type="project" value="TreeGrafter"/>
</dbReference>
<dbReference type="GO" id="GO:0005524">
    <property type="term" value="F:ATP binding"/>
    <property type="evidence" value="ECO:0007669"/>
    <property type="project" value="UniProtKB-KW"/>
</dbReference>
<dbReference type="GO" id="GO:0004637">
    <property type="term" value="F:phosphoribosylamine-glycine ligase activity"/>
    <property type="evidence" value="ECO:0007669"/>
    <property type="project" value="TreeGrafter"/>
</dbReference>
<dbReference type="GO" id="GO:0004641">
    <property type="term" value="F:phosphoribosylformylglycinamidine cyclo-ligase activity"/>
    <property type="evidence" value="ECO:0007669"/>
    <property type="project" value="UniProtKB-UniRule"/>
</dbReference>
<dbReference type="GO" id="GO:0006189">
    <property type="term" value="P:'de novo' IMP biosynthetic process"/>
    <property type="evidence" value="ECO:0007669"/>
    <property type="project" value="UniProtKB-UniRule"/>
</dbReference>
<dbReference type="GO" id="GO:0046084">
    <property type="term" value="P:adenine biosynthetic process"/>
    <property type="evidence" value="ECO:0007669"/>
    <property type="project" value="TreeGrafter"/>
</dbReference>
<dbReference type="CDD" id="cd02196">
    <property type="entry name" value="PurM"/>
    <property type="match status" value="1"/>
</dbReference>
<dbReference type="FunFam" id="3.30.1330.10:FF:000001">
    <property type="entry name" value="Phosphoribosylformylglycinamidine cyclo-ligase"/>
    <property type="match status" value="1"/>
</dbReference>
<dbReference type="FunFam" id="3.90.650.10:FF:000001">
    <property type="entry name" value="Phosphoribosylformylglycinamidine cyclo-ligase"/>
    <property type="match status" value="1"/>
</dbReference>
<dbReference type="Gene3D" id="3.90.650.10">
    <property type="entry name" value="PurM-like C-terminal domain"/>
    <property type="match status" value="1"/>
</dbReference>
<dbReference type="Gene3D" id="3.30.1330.10">
    <property type="entry name" value="PurM-like, N-terminal domain"/>
    <property type="match status" value="1"/>
</dbReference>
<dbReference type="HAMAP" id="MF_00741">
    <property type="entry name" value="AIRS"/>
    <property type="match status" value="1"/>
</dbReference>
<dbReference type="InterPro" id="IPR010918">
    <property type="entry name" value="PurM-like_C_dom"/>
</dbReference>
<dbReference type="InterPro" id="IPR036676">
    <property type="entry name" value="PurM-like_C_sf"/>
</dbReference>
<dbReference type="InterPro" id="IPR016188">
    <property type="entry name" value="PurM-like_N"/>
</dbReference>
<dbReference type="InterPro" id="IPR036921">
    <property type="entry name" value="PurM-like_N_sf"/>
</dbReference>
<dbReference type="InterPro" id="IPR004733">
    <property type="entry name" value="PurM_cligase"/>
</dbReference>
<dbReference type="NCBIfam" id="TIGR00878">
    <property type="entry name" value="purM"/>
    <property type="match status" value="1"/>
</dbReference>
<dbReference type="PANTHER" id="PTHR10520:SF12">
    <property type="entry name" value="TRIFUNCTIONAL PURINE BIOSYNTHETIC PROTEIN ADENOSINE-3"/>
    <property type="match status" value="1"/>
</dbReference>
<dbReference type="PANTHER" id="PTHR10520">
    <property type="entry name" value="TRIFUNCTIONAL PURINE BIOSYNTHETIC PROTEIN ADENOSINE-3-RELATED"/>
    <property type="match status" value="1"/>
</dbReference>
<dbReference type="Pfam" id="PF00586">
    <property type="entry name" value="AIRS"/>
    <property type="match status" value="1"/>
</dbReference>
<dbReference type="Pfam" id="PF02769">
    <property type="entry name" value="AIRS_C"/>
    <property type="match status" value="1"/>
</dbReference>
<dbReference type="SUPFAM" id="SSF56042">
    <property type="entry name" value="PurM C-terminal domain-like"/>
    <property type="match status" value="1"/>
</dbReference>
<dbReference type="SUPFAM" id="SSF55326">
    <property type="entry name" value="PurM N-terminal domain-like"/>
    <property type="match status" value="1"/>
</dbReference>
<reference key="1">
    <citation type="journal article" date="2005" name="Nat. Biotechnol.">
        <title>Complete genome sequence of the plant commensal Pseudomonas fluorescens Pf-5.</title>
        <authorList>
            <person name="Paulsen I.T."/>
            <person name="Press C.M."/>
            <person name="Ravel J."/>
            <person name="Kobayashi D.Y."/>
            <person name="Myers G.S.A."/>
            <person name="Mavrodi D.V."/>
            <person name="DeBoy R.T."/>
            <person name="Seshadri R."/>
            <person name="Ren Q."/>
            <person name="Madupu R."/>
            <person name="Dodson R.J."/>
            <person name="Durkin A.S."/>
            <person name="Brinkac L.M."/>
            <person name="Daugherty S.C."/>
            <person name="Sullivan S.A."/>
            <person name="Rosovitz M.J."/>
            <person name="Gwinn M.L."/>
            <person name="Zhou L."/>
            <person name="Schneider D.J."/>
            <person name="Cartinhour S.W."/>
            <person name="Nelson W.C."/>
            <person name="Weidman J."/>
            <person name="Watkins K."/>
            <person name="Tran K."/>
            <person name="Khouri H."/>
            <person name="Pierson E.A."/>
            <person name="Pierson L.S. III"/>
            <person name="Thomashow L.S."/>
            <person name="Loper J.E."/>
        </authorList>
    </citation>
    <scope>NUCLEOTIDE SEQUENCE [LARGE SCALE GENOMIC DNA]</scope>
    <source>
        <strain>ATCC BAA-477 / NRRL B-23932 / Pf-5</strain>
    </source>
</reference>
<evidence type="ECO:0000255" key="1">
    <source>
        <dbReference type="HAMAP-Rule" id="MF_00741"/>
    </source>
</evidence>
<keyword id="KW-0067">ATP-binding</keyword>
<keyword id="KW-0963">Cytoplasm</keyword>
<keyword id="KW-0436">Ligase</keyword>
<keyword id="KW-0547">Nucleotide-binding</keyword>
<keyword id="KW-0658">Purine biosynthesis</keyword>